<evidence type="ECO:0000255" key="1">
    <source>
        <dbReference type="HAMAP-Rule" id="MF_01864"/>
    </source>
</evidence>
<evidence type="ECO:0000255" key="2">
    <source>
        <dbReference type="PROSITE-ProRule" id="PRU01266"/>
    </source>
</evidence>
<evidence type="ECO:0000256" key="3">
    <source>
        <dbReference type="SAM" id="MobiDB-lite"/>
    </source>
</evidence>
<reference key="1">
    <citation type="journal article" date="2003" name="Nat. Genet.">
        <title>Comparative analysis of the genome sequences of Bordetella pertussis, Bordetella parapertussis and Bordetella bronchiseptica.</title>
        <authorList>
            <person name="Parkhill J."/>
            <person name="Sebaihia M."/>
            <person name="Preston A."/>
            <person name="Murphy L.D."/>
            <person name="Thomson N.R."/>
            <person name="Harris D.E."/>
            <person name="Holden M.T.G."/>
            <person name="Churcher C.M."/>
            <person name="Bentley S.D."/>
            <person name="Mungall K.L."/>
            <person name="Cerdeno-Tarraga A.-M."/>
            <person name="Temple L."/>
            <person name="James K.D."/>
            <person name="Harris B."/>
            <person name="Quail M.A."/>
            <person name="Achtman M."/>
            <person name="Atkin R."/>
            <person name="Baker S."/>
            <person name="Basham D."/>
            <person name="Bason N."/>
            <person name="Cherevach I."/>
            <person name="Chillingworth T."/>
            <person name="Collins M."/>
            <person name="Cronin A."/>
            <person name="Davis P."/>
            <person name="Doggett J."/>
            <person name="Feltwell T."/>
            <person name="Goble A."/>
            <person name="Hamlin N."/>
            <person name="Hauser H."/>
            <person name="Holroyd S."/>
            <person name="Jagels K."/>
            <person name="Leather S."/>
            <person name="Moule S."/>
            <person name="Norberczak H."/>
            <person name="O'Neil S."/>
            <person name="Ormond D."/>
            <person name="Price C."/>
            <person name="Rabbinowitsch E."/>
            <person name="Rutter S."/>
            <person name="Sanders M."/>
            <person name="Saunders D."/>
            <person name="Seeger K."/>
            <person name="Sharp S."/>
            <person name="Simmonds M."/>
            <person name="Skelton J."/>
            <person name="Squares R."/>
            <person name="Squares S."/>
            <person name="Stevens K."/>
            <person name="Unwin L."/>
            <person name="Whitehead S."/>
            <person name="Barrell B.G."/>
            <person name="Maskell D.J."/>
        </authorList>
    </citation>
    <scope>NUCLEOTIDE SEQUENCE [LARGE SCALE GENOMIC DNA]</scope>
    <source>
        <strain>12822 / ATCC BAA-587 / NCTC 13253</strain>
    </source>
</reference>
<keyword id="KW-0004">4Fe-4S</keyword>
<keyword id="KW-0963">Cytoplasm</keyword>
<keyword id="KW-0408">Iron</keyword>
<keyword id="KW-0411">Iron-sulfur</keyword>
<keyword id="KW-0479">Metal-binding</keyword>
<keyword id="KW-0949">S-adenosyl-L-methionine</keyword>
<keyword id="KW-0808">Transferase</keyword>
<keyword id="KW-0819">tRNA processing</keyword>
<comment type="function">
    <text evidence="1">Catalyzes the methylthiolation of N6-(dimethylallyl)adenosine (i(6)A), leading to the formation of 2-methylthio-N6-(dimethylallyl)adenosine (ms(2)i(6)A) at position 37 in tRNAs that read codons beginning with uridine.</text>
</comment>
<comment type="catalytic activity">
    <reaction evidence="1">
        <text>N(6)-dimethylallyladenosine(37) in tRNA + (sulfur carrier)-SH + AH2 + 2 S-adenosyl-L-methionine = 2-methylsulfanyl-N(6)-dimethylallyladenosine(37) in tRNA + (sulfur carrier)-H + 5'-deoxyadenosine + L-methionine + A + S-adenosyl-L-homocysteine + 2 H(+)</text>
        <dbReference type="Rhea" id="RHEA:37067"/>
        <dbReference type="Rhea" id="RHEA-COMP:10375"/>
        <dbReference type="Rhea" id="RHEA-COMP:10376"/>
        <dbReference type="Rhea" id="RHEA-COMP:14737"/>
        <dbReference type="Rhea" id="RHEA-COMP:14739"/>
        <dbReference type="ChEBI" id="CHEBI:13193"/>
        <dbReference type="ChEBI" id="CHEBI:15378"/>
        <dbReference type="ChEBI" id="CHEBI:17319"/>
        <dbReference type="ChEBI" id="CHEBI:17499"/>
        <dbReference type="ChEBI" id="CHEBI:29917"/>
        <dbReference type="ChEBI" id="CHEBI:57844"/>
        <dbReference type="ChEBI" id="CHEBI:57856"/>
        <dbReference type="ChEBI" id="CHEBI:59789"/>
        <dbReference type="ChEBI" id="CHEBI:64428"/>
        <dbReference type="ChEBI" id="CHEBI:74415"/>
        <dbReference type="ChEBI" id="CHEBI:74417"/>
        <dbReference type="EC" id="2.8.4.3"/>
    </reaction>
</comment>
<comment type="cofactor">
    <cofactor evidence="1">
        <name>[4Fe-4S] cluster</name>
        <dbReference type="ChEBI" id="CHEBI:49883"/>
    </cofactor>
    <text evidence="1">Binds 2 [4Fe-4S] clusters. One cluster is coordinated with 3 cysteines and an exchangeable S-adenosyl-L-methionine.</text>
</comment>
<comment type="subunit">
    <text evidence="1">Monomer.</text>
</comment>
<comment type="subcellular location">
    <subcellularLocation>
        <location evidence="1">Cytoplasm</location>
    </subcellularLocation>
</comment>
<comment type="similarity">
    <text evidence="1">Belongs to the methylthiotransferase family. MiaB subfamily.</text>
</comment>
<organism>
    <name type="scientific">Bordetella parapertussis (strain 12822 / ATCC BAA-587 / NCTC 13253)</name>
    <dbReference type="NCBI Taxonomy" id="257311"/>
    <lineage>
        <taxon>Bacteria</taxon>
        <taxon>Pseudomonadati</taxon>
        <taxon>Pseudomonadota</taxon>
        <taxon>Betaproteobacteria</taxon>
        <taxon>Burkholderiales</taxon>
        <taxon>Alcaligenaceae</taxon>
        <taxon>Bordetella</taxon>
    </lineage>
</organism>
<feature type="chain" id="PRO_0000374157" description="tRNA-2-methylthio-N(6)-dimethylallyladenosine synthase">
    <location>
        <begin position="1"/>
        <end position="475"/>
    </location>
</feature>
<feature type="domain" description="MTTase N-terminal" evidence="1">
    <location>
        <begin position="27"/>
        <end position="144"/>
    </location>
</feature>
<feature type="domain" description="Radical SAM core" evidence="2">
    <location>
        <begin position="167"/>
        <end position="400"/>
    </location>
</feature>
<feature type="domain" description="TRAM" evidence="1">
    <location>
        <begin position="403"/>
        <end position="466"/>
    </location>
</feature>
<feature type="region of interest" description="Disordered" evidence="3">
    <location>
        <begin position="1"/>
        <end position="22"/>
    </location>
</feature>
<feature type="compositionally biased region" description="Basic and acidic residues" evidence="3">
    <location>
        <begin position="1"/>
        <end position="10"/>
    </location>
</feature>
<feature type="binding site" evidence="1">
    <location>
        <position position="36"/>
    </location>
    <ligand>
        <name>[4Fe-4S] cluster</name>
        <dbReference type="ChEBI" id="CHEBI:49883"/>
        <label>1</label>
    </ligand>
</feature>
<feature type="binding site" evidence="1">
    <location>
        <position position="73"/>
    </location>
    <ligand>
        <name>[4Fe-4S] cluster</name>
        <dbReference type="ChEBI" id="CHEBI:49883"/>
        <label>1</label>
    </ligand>
</feature>
<feature type="binding site" evidence="1">
    <location>
        <position position="107"/>
    </location>
    <ligand>
        <name>[4Fe-4S] cluster</name>
        <dbReference type="ChEBI" id="CHEBI:49883"/>
        <label>1</label>
    </ligand>
</feature>
<feature type="binding site" evidence="1">
    <location>
        <position position="181"/>
    </location>
    <ligand>
        <name>[4Fe-4S] cluster</name>
        <dbReference type="ChEBI" id="CHEBI:49883"/>
        <label>2</label>
        <note>4Fe-4S-S-AdoMet</note>
    </ligand>
</feature>
<feature type="binding site" evidence="1">
    <location>
        <position position="185"/>
    </location>
    <ligand>
        <name>[4Fe-4S] cluster</name>
        <dbReference type="ChEBI" id="CHEBI:49883"/>
        <label>2</label>
        <note>4Fe-4S-S-AdoMet</note>
    </ligand>
</feature>
<feature type="binding site" evidence="1">
    <location>
        <position position="188"/>
    </location>
    <ligand>
        <name>[4Fe-4S] cluster</name>
        <dbReference type="ChEBI" id="CHEBI:49883"/>
        <label>2</label>
        <note>4Fe-4S-S-AdoMet</note>
    </ligand>
</feature>
<gene>
    <name evidence="1" type="primary">miaB</name>
    <name type="ordered locus">BPP1141</name>
</gene>
<proteinExistence type="inferred from homology"/>
<accession>Q7WB66</accession>
<dbReference type="EC" id="2.8.4.3" evidence="1"/>
<dbReference type="EMBL" id="BX640426">
    <property type="protein sequence ID" value="CAE36442.1"/>
    <property type="molecule type" value="Genomic_DNA"/>
</dbReference>
<dbReference type="RefSeq" id="WP_010927876.1">
    <property type="nucleotide sequence ID" value="NC_002928.3"/>
</dbReference>
<dbReference type="SMR" id="Q7WB66"/>
<dbReference type="GeneID" id="93202896"/>
<dbReference type="KEGG" id="bpa:BPP1141"/>
<dbReference type="HOGENOM" id="CLU_018697_2_0_4"/>
<dbReference type="Proteomes" id="UP000001421">
    <property type="component" value="Chromosome"/>
</dbReference>
<dbReference type="GO" id="GO:0005829">
    <property type="term" value="C:cytosol"/>
    <property type="evidence" value="ECO:0007669"/>
    <property type="project" value="TreeGrafter"/>
</dbReference>
<dbReference type="GO" id="GO:0051539">
    <property type="term" value="F:4 iron, 4 sulfur cluster binding"/>
    <property type="evidence" value="ECO:0007669"/>
    <property type="project" value="UniProtKB-UniRule"/>
</dbReference>
<dbReference type="GO" id="GO:0046872">
    <property type="term" value="F:metal ion binding"/>
    <property type="evidence" value="ECO:0007669"/>
    <property type="project" value="UniProtKB-KW"/>
</dbReference>
<dbReference type="GO" id="GO:0035597">
    <property type="term" value="F:N6-isopentenyladenosine methylthiotransferase activity"/>
    <property type="evidence" value="ECO:0007669"/>
    <property type="project" value="TreeGrafter"/>
</dbReference>
<dbReference type="CDD" id="cd01335">
    <property type="entry name" value="Radical_SAM"/>
    <property type="match status" value="1"/>
</dbReference>
<dbReference type="FunFam" id="3.40.50.12160:FF:000001">
    <property type="entry name" value="tRNA-2-methylthio-N(6)-dimethylallyladenosine synthase"/>
    <property type="match status" value="1"/>
</dbReference>
<dbReference type="FunFam" id="3.80.30.20:FF:000001">
    <property type="entry name" value="tRNA-2-methylthio-N(6)-dimethylallyladenosine synthase 2"/>
    <property type="match status" value="1"/>
</dbReference>
<dbReference type="Gene3D" id="3.40.50.12160">
    <property type="entry name" value="Methylthiotransferase, N-terminal domain"/>
    <property type="match status" value="1"/>
</dbReference>
<dbReference type="Gene3D" id="3.80.30.20">
    <property type="entry name" value="tm_1862 like domain"/>
    <property type="match status" value="1"/>
</dbReference>
<dbReference type="HAMAP" id="MF_01864">
    <property type="entry name" value="tRNA_metthiotr_MiaB"/>
    <property type="match status" value="1"/>
</dbReference>
<dbReference type="InterPro" id="IPR006638">
    <property type="entry name" value="Elp3/MiaA/NifB-like_rSAM"/>
</dbReference>
<dbReference type="InterPro" id="IPR005839">
    <property type="entry name" value="Methylthiotransferase"/>
</dbReference>
<dbReference type="InterPro" id="IPR020612">
    <property type="entry name" value="Methylthiotransferase_CS"/>
</dbReference>
<dbReference type="InterPro" id="IPR013848">
    <property type="entry name" value="Methylthiotransferase_N"/>
</dbReference>
<dbReference type="InterPro" id="IPR038135">
    <property type="entry name" value="Methylthiotransferase_N_sf"/>
</dbReference>
<dbReference type="InterPro" id="IPR006463">
    <property type="entry name" value="MiaB_methiolase"/>
</dbReference>
<dbReference type="InterPro" id="IPR007197">
    <property type="entry name" value="rSAM"/>
</dbReference>
<dbReference type="InterPro" id="IPR023404">
    <property type="entry name" value="rSAM_horseshoe"/>
</dbReference>
<dbReference type="InterPro" id="IPR002792">
    <property type="entry name" value="TRAM_dom"/>
</dbReference>
<dbReference type="NCBIfam" id="TIGR01574">
    <property type="entry name" value="miaB-methiolase"/>
    <property type="match status" value="1"/>
</dbReference>
<dbReference type="NCBIfam" id="TIGR00089">
    <property type="entry name" value="MiaB/RimO family radical SAM methylthiotransferase"/>
    <property type="match status" value="1"/>
</dbReference>
<dbReference type="PANTHER" id="PTHR43020">
    <property type="entry name" value="CDK5 REGULATORY SUBUNIT-ASSOCIATED PROTEIN 1"/>
    <property type="match status" value="1"/>
</dbReference>
<dbReference type="PANTHER" id="PTHR43020:SF2">
    <property type="entry name" value="MITOCHONDRIAL TRNA METHYLTHIOTRANSFERASE CDK5RAP1"/>
    <property type="match status" value="1"/>
</dbReference>
<dbReference type="Pfam" id="PF04055">
    <property type="entry name" value="Radical_SAM"/>
    <property type="match status" value="1"/>
</dbReference>
<dbReference type="Pfam" id="PF01938">
    <property type="entry name" value="TRAM"/>
    <property type="match status" value="1"/>
</dbReference>
<dbReference type="Pfam" id="PF00919">
    <property type="entry name" value="UPF0004"/>
    <property type="match status" value="1"/>
</dbReference>
<dbReference type="SFLD" id="SFLDF00273">
    <property type="entry name" value="(dimethylallyl)adenosine_tRNA"/>
    <property type="match status" value="1"/>
</dbReference>
<dbReference type="SFLD" id="SFLDG01082">
    <property type="entry name" value="B12-binding_domain_containing"/>
    <property type="match status" value="1"/>
</dbReference>
<dbReference type="SFLD" id="SFLDG01061">
    <property type="entry name" value="methylthiotransferase"/>
    <property type="match status" value="1"/>
</dbReference>
<dbReference type="SMART" id="SM00729">
    <property type="entry name" value="Elp3"/>
    <property type="match status" value="1"/>
</dbReference>
<dbReference type="SUPFAM" id="SSF102114">
    <property type="entry name" value="Radical SAM enzymes"/>
    <property type="match status" value="1"/>
</dbReference>
<dbReference type="PROSITE" id="PS51449">
    <property type="entry name" value="MTTASE_N"/>
    <property type="match status" value="1"/>
</dbReference>
<dbReference type="PROSITE" id="PS01278">
    <property type="entry name" value="MTTASE_RADICAL"/>
    <property type="match status" value="1"/>
</dbReference>
<dbReference type="PROSITE" id="PS51918">
    <property type="entry name" value="RADICAL_SAM"/>
    <property type="match status" value="1"/>
</dbReference>
<dbReference type="PROSITE" id="PS50926">
    <property type="entry name" value="TRAM"/>
    <property type="match status" value="1"/>
</dbReference>
<sequence length="475" mass="52437">MQETTVKRDGASPSDAGTPATTAQGLGKLYIRTFGCQMNEYDSDKMADVLRADQGLELTDNPEDADVILFNTCSVREKAQEKVFSDLGRVQHLKKQNPNLVIGVGGCVASQEGEAIVKRAPYVDVVFGPQTLHRLPDLIKRRRAQGVSQVDISFPEIEKFDALPPPRVDGATAFVSIMEGCSKYCSFCVVPYTRGEEVSRPFDDVLLEIADLADQGVKEVTLLGQNVNAYRGAMGDSGEIADFAMLLEYVHEIPGIERIRYTTSHPKEMTQRMVDAYARLPKLVSFLHLPVQAGSDRVLAAMKRGYTALEFKSVVRRLRAARPSLTLSSDFIVGFPGETEEDFQKTMKLIEDVGFDTSFSFVYSRRPGTPAADLHDDTPQDVKLRRLQQLQALINQQAAAIAQGMIGTRQRVLVEGPSRRDPNELMGRTENNRIVNFPGVPRLIGHMVDVVVTHAHTNSLRGRVAGIERDTSGAE</sequence>
<protein>
    <recommendedName>
        <fullName evidence="1">tRNA-2-methylthio-N(6)-dimethylallyladenosine synthase</fullName>
        <ecNumber evidence="1">2.8.4.3</ecNumber>
    </recommendedName>
    <alternativeName>
        <fullName evidence="1">(Dimethylallyl)adenosine tRNA methylthiotransferase MiaB</fullName>
    </alternativeName>
    <alternativeName>
        <fullName evidence="1">tRNA-i(6)A37 methylthiotransferase</fullName>
    </alternativeName>
</protein>
<name>MIAB_BORPA</name>